<reference key="1">
    <citation type="submission" date="2006-12" db="EMBL/GenBank/DDBJ databases">
        <title>Complete sequence of Halorhodospira halophila SL1.</title>
        <authorList>
            <consortium name="US DOE Joint Genome Institute"/>
            <person name="Copeland A."/>
            <person name="Lucas S."/>
            <person name="Lapidus A."/>
            <person name="Barry K."/>
            <person name="Detter J.C."/>
            <person name="Glavina del Rio T."/>
            <person name="Hammon N."/>
            <person name="Israni S."/>
            <person name="Dalin E."/>
            <person name="Tice H."/>
            <person name="Pitluck S."/>
            <person name="Saunders E."/>
            <person name="Brettin T."/>
            <person name="Bruce D."/>
            <person name="Han C."/>
            <person name="Tapia R."/>
            <person name="Schmutz J."/>
            <person name="Larimer F."/>
            <person name="Land M."/>
            <person name="Hauser L."/>
            <person name="Kyrpides N."/>
            <person name="Mikhailova N."/>
            <person name="Hoff W."/>
            <person name="Richardson P."/>
        </authorList>
    </citation>
    <scope>NUCLEOTIDE SEQUENCE [LARGE SCALE GENOMIC DNA]</scope>
    <source>
        <strain>DSM 244 / SL1</strain>
    </source>
</reference>
<accession>A1WZH9</accession>
<comment type="function">
    <text evidence="1">Required for the formation of a threonylcarbamoyl group on adenosine at position 37 (t(6)A37) in tRNAs that read codons beginning with adenine. Catalyzes the conversion of L-threonine, HCO(3)(-)/CO(2) and ATP to give threonylcarbamoyl-AMP (TC-AMP) as the acyladenylate intermediate, with the release of diphosphate.</text>
</comment>
<comment type="catalytic activity">
    <reaction evidence="1">
        <text>L-threonine + hydrogencarbonate + ATP = L-threonylcarbamoyladenylate + diphosphate + H2O</text>
        <dbReference type="Rhea" id="RHEA:36407"/>
        <dbReference type="ChEBI" id="CHEBI:15377"/>
        <dbReference type="ChEBI" id="CHEBI:17544"/>
        <dbReference type="ChEBI" id="CHEBI:30616"/>
        <dbReference type="ChEBI" id="CHEBI:33019"/>
        <dbReference type="ChEBI" id="CHEBI:57926"/>
        <dbReference type="ChEBI" id="CHEBI:73682"/>
        <dbReference type="EC" id="2.7.7.87"/>
    </reaction>
</comment>
<comment type="subcellular location">
    <subcellularLocation>
        <location evidence="1">Cytoplasm</location>
    </subcellularLocation>
</comment>
<comment type="similarity">
    <text evidence="1">Belongs to the SUA5 family. TsaC subfamily.</text>
</comment>
<proteinExistence type="inferred from homology"/>
<protein>
    <recommendedName>
        <fullName evidence="1">Threonylcarbamoyl-AMP synthase</fullName>
        <shortName evidence="1">TC-AMP synthase</shortName>
        <ecNumber evidence="1">2.7.7.87</ecNumber>
    </recommendedName>
    <alternativeName>
        <fullName evidence="1">L-threonylcarbamoyladenylate synthase</fullName>
    </alternativeName>
    <alternativeName>
        <fullName evidence="1">t(6)A37 threonylcarbamoyladenosine biosynthesis protein TsaC</fullName>
    </alternativeName>
    <alternativeName>
        <fullName evidence="1">tRNA threonylcarbamoyladenosine biosynthesis protein TsaC</fullName>
    </alternativeName>
</protein>
<sequence length="191" mass="20522">MNECPPGTRPFRVRHAAAELRQGGVVAYPTEAVWGLGCDPRNADAVARLLALKGRPERQGLILIAAESRQLARYLAPLPAEWAETIQASWPGPMTWVLPASTRAPRWVSGGRDTLAVRVTAHPVAAALCSAFGGALVSTSANPSARRPARSVAEVRRYFGTRIDALVPGRLGGLERPTPIRDGRSGAYLRR</sequence>
<keyword id="KW-0067">ATP-binding</keyword>
<keyword id="KW-0963">Cytoplasm</keyword>
<keyword id="KW-0547">Nucleotide-binding</keyword>
<keyword id="KW-0548">Nucleotidyltransferase</keyword>
<keyword id="KW-1185">Reference proteome</keyword>
<keyword id="KW-0808">Transferase</keyword>
<keyword id="KW-0819">tRNA processing</keyword>
<name>TSAC_HALHL</name>
<feature type="chain" id="PRO_0000352929" description="Threonylcarbamoyl-AMP synthase">
    <location>
        <begin position="1"/>
        <end position="191"/>
    </location>
</feature>
<feature type="domain" description="YrdC-like" evidence="1">
    <location>
        <begin position="10"/>
        <end position="191"/>
    </location>
</feature>
<gene>
    <name evidence="1" type="primary">tsaC</name>
    <name type="synonym">rimN</name>
    <name type="ordered locus">Hhal_2328</name>
</gene>
<organism>
    <name type="scientific">Halorhodospira halophila (strain DSM 244 / SL1)</name>
    <name type="common">Ectothiorhodospira halophila (strain DSM 244 / SL1)</name>
    <dbReference type="NCBI Taxonomy" id="349124"/>
    <lineage>
        <taxon>Bacteria</taxon>
        <taxon>Pseudomonadati</taxon>
        <taxon>Pseudomonadota</taxon>
        <taxon>Gammaproteobacteria</taxon>
        <taxon>Chromatiales</taxon>
        <taxon>Ectothiorhodospiraceae</taxon>
        <taxon>Halorhodospira</taxon>
    </lineage>
</organism>
<dbReference type="EC" id="2.7.7.87" evidence="1"/>
<dbReference type="EMBL" id="CP000544">
    <property type="protein sequence ID" value="ABM63091.1"/>
    <property type="molecule type" value="Genomic_DNA"/>
</dbReference>
<dbReference type="RefSeq" id="WP_011815113.1">
    <property type="nucleotide sequence ID" value="NC_008789.1"/>
</dbReference>
<dbReference type="SMR" id="A1WZH9"/>
<dbReference type="STRING" id="349124.Hhal_2328"/>
<dbReference type="KEGG" id="hha:Hhal_2328"/>
<dbReference type="eggNOG" id="COG0009">
    <property type="taxonomic scope" value="Bacteria"/>
</dbReference>
<dbReference type="HOGENOM" id="CLU_031397_6_0_6"/>
<dbReference type="OrthoDB" id="9814580at2"/>
<dbReference type="Proteomes" id="UP000000647">
    <property type="component" value="Chromosome"/>
</dbReference>
<dbReference type="GO" id="GO:0005737">
    <property type="term" value="C:cytoplasm"/>
    <property type="evidence" value="ECO:0007669"/>
    <property type="project" value="UniProtKB-SubCell"/>
</dbReference>
<dbReference type="GO" id="GO:0005524">
    <property type="term" value="F:ATP binding"/>
    <property type="evidence" value="ECO:0007669"/>
    <property type="project" value="UniProtKB-UniRule"/>
</dbReference>
<dbReference type="GO" id="GO:0003725">
    <property type="term" value="F:double-stranded RNA binding"/>
    <property type="evidence" value="ECO:0007669"/>
    <property type="project" value="InterPro"/>
</dbReference>
<dbReference type="GO" id="GO:0061710">
    <property type="term" value="F:L-threonylcarbamoyladenylate synthase"/>
    <property type="evidence" value="ECO:0007669"/>
    <property type="project" value="UniProtKB-EC"/>
</dbReference>
<dbReference type="GO" id="GO:0000049">
    <property type="term" value="F:tRNA binding"/>
    <property type="evidence" value="ECO:0007669"/>
    <property type="project" value="TreeGrafter"/>
</dbReference>
<dbReference type="GO" id="GO:0006450">
    <property type="term" value="P:regulation of translational fidelity"/>
    <property type="evidence" value="ECO:0007669"/>
    <property type="project" value="TreeGrafter"/>
</dbReference>
<dbReference type="GO" id="GO:0002949">
    <property type="term" value="P:tRNA threonylcarbamoyladenosine modification"/>
    <property type="evidence" value="ECO:0007669"/>
    <property type="project" value="UniProtKB-UniRule"/>
</dbReference>
<dbReference type="FunFam" id="3.90.870.10:FF:000004">
    <property type="entry name" value="Threonylcarbamoyl-AMP synthase"/>
    <property type="match status" value="1"/>
</dbReference>
<dbReference type="Gene3D" id="3.90.870.10">
    <property type="entry name" value="DHBP synthase"/>
    <property type="match status" value="1"/>
</dbReference>
<dbReference type="HAMAP" id="MF_01852">
    <property type="entry name" value="TsaC"/>
    <property type="match status" value="1"/>
</dbReference>
<dbReference type="InterPro" id="IPR017945">
    <property type="entry name" value="DHBP_synth_RibB-like_a/b_dom"/>
</dbReference>
<dbReference type="InterPro" id="IPR006070">
    <property type="entry name" value="Sua5-like_dom"/>
</dbReference>
<dbReference type="InterPro" id="IPR023535">
    <property type="entry name" value="TC-AMP_synthase"/>
</dbReference>
<dbReference type="InterPro" id="IPR050156">
    <property type="entry name" value="TC-AMP_synthase_SUA5"/>
</dbReference>
<dbReference type="NCBIfam" id="TIGR00057">
    <property type="entry name" value="L-threonylcarbamoyladenylate synthase"/>
    <property type="match status" value="1"/>
</dbReference>
<dbReference type="PANTHER" id="PTHR17490">
    <property type="entry name" value="SUA5"/>
    <property type="match status" value="1"/>
</dbReference>
<dbReference type="PANTHER" id="PTHR17490:SF18">
    <property type="entry name" value="THREONYLCARBAMOYL-AMP SYNTHASE"/>
    <property type="match status" value="1"/>
</dbReference>
<dbReference type="Pfam" id="PF01300">
    <property type="entry name" value="Sua5_yciO_yrdC"/>
    <property type="match status" value="1"/>
</dbReference>
<dbReference type="SUPFAM" id="SSF55821">
    <property type="entry name" value="YrdC/RibB"/>
    <property type="match status" value="1"/>
</dbReference>
<dbReference type="PROSITE" id="PS51163">
    <property type="entry name" value="YRDC"/>
    <property type="match status" value="1"/>
</dbReference>
<evidence type="ECO:0000255" key="1">
    <source>
        <dbReference type="HAMAP-Rule" id="MF_01852"/>
    </source>
</evidence>